<evidence type="ECO:0000255" key="1"/>
<evidence type="ECO:0000269" key="2">
    <source>
    </source>
</evidence>
<evidence type="ECO:0000305" key="3"/>
<evidence type="ECO:0000312" key="4">
    <source>
        <dbReference type="EMBL" id="AAG05334.1"/>
    </source>
</evidence>
<protein>
    <recommendedName>
        <fullName evidence="3">D-ribose/D-allose-binding protein</fullName>
    </recommendedName>
</protein>
<comment type="function">
    <text evidence="2">Binds specifically both D-ribose and D-allose, with affinities in the lower micromolar range.</text>
</comment>
<comment type="subcellular location">
    <subcellularLocation>
        <location evidence="3">Periplasm</location>
    </subcellularLocation>
</comment>
<comment type="similarity">
    <text evidence="3">Belongs to the bacterial solute-binding protein 2 family.</text>
</comment>
<feature type="signal peptide" evidence="1">
    <location>
        <begin position="1"/>
        <end position="29"/>
    </location>
</feature>
<feature type="chain" id="PRO_5004327018" description="D-ribose/D-allose-binding protein" evidence="1">
    <location>
        <begin position="30"/>
        <end position="319"/>
    </location>
</feature>
<accession>Q9I2F8</accession>
<reference key="1">
    <citation type="journal article" date="2000" name="Nature">
        <title>Complete genome sequence of Pseudomonas aeruginosa PAO1, an opportunistic pathogen.</title>
        <authorList>
            <person name="Stover C.K."/>
            <person name="Pham X.-Q.T."/>
            <person name="Erwin A.L."/>
            <person name="Mizoguchi S.D."/>
            <person name="Warrener P."/>
            <person name="Hickey M.J."/>
            <person name="Brinkman F.S.L."/>
            <person name="Hufnagle W.O."/>
            <person name="Kowalik D.J."/>
            <person name="Lagrou M."/>
            <person name="Garber R.L."/>
            <person name="Goltry L."/>
            <person name="Tolentino E."/>
            <person name="Westbrock-Wadman S."/>
            <person name="Yuan Y."/>
            <person name="Brody L.L."/>
            <person name="Coulter S.N."/>
            <person name="Folger K.R."/>
            <person name="Kas A."/>
            <person name="Larbig K."/>
            <person name="Lim R.M."/>
            <person name="Smith K.A."/>
            <person name="Spencer D.H."/>
            <person name="Wong G.K.-S."/>
            <person name="Wu Z."/>
            <person name="Paulsen I.T."/>
            <person name="Reizer J."/>
            <person name="Saier M.H. Jr."/>
            <person name="Hancock R.E.W."/>
            <person name="Lory S."/>
            <person name="Olson M.V."/>
        </authorList>
    </citation>
    <scope>NUCLEOTIDE SEQUENCE [LARGE SCALE GENOMIC DNA]</scope>
    <source>
        <strain>ATCC 15692 / DSM 22644 / CIP 104116 / JCM 14847 / LMG 12228 / 1C / PRS 101 / PAO1</strain>
    </source>
</reference>
<reference key="2">
    <citation type="journal article" date="2019" name="Int. J. Mol. Sci.">
        <title>Determination of Ligand Profiles for Pseudomonas aeruginosa Solute Binding Proteins.</title>
        <authorList>
            <person name="Fernandez M."/>
            <person name="Rico-Jimenez M."/>
            <person name="Ortega A."/>
            <person name="Daddaoua A."/>
            <person name="Garcia Garcia A.I."/>
            <person name="Martin-Mora D."/>
            <person name="Torres N.M."/>
            <person name="Tajuelo A."/>
            <person name="Matilla M.A."/>
            <person name="Krell T."/>
        </authorList>
    </citation>
    <scope>FUNCTION AS A BINDING PROTEIN</scope>
    <source>
        <strain>ATCC 15692 / DSM 22644 / CIP 104116 / JCM 14847 / LMG 12228 / 1C / PRS 101 / PAO1</strain>
    </source>
</reference>
<organism>
    <name type="scientific">Pseudomonas aeruginosa (strain ATCC 15692 / DSM 22644 / CIP 104116 / JCM 14847 / LMG 12228 / 1C / PRS 101 / PAO1)</name>
    <dbReference type="NCBI Taxonomy" id="208964"/>
    <lineage>
        <taxon>Bacteria</taxon>
        <taxon>Pseudomonadati</taxon>
        <taxon>Pseudomonadota</taxon>
        <taxon>Gammaproteobacteria</taxon>
        <taxon>Pseudomonadales</taxon>
        <taxon>Pseudomonadaceae</taxon>
        <taxon>Pseudomonas</taxon>
    </lineage>
</organism>
<keyword id="KW-0574">Periplasm</keyword>
<keyword id="KW-1185">Reference proteome</keyword>
<keyword id="KW-0732">Signal</keyword>
<keyword id="KW-0762">Sugar transport</keyword>
<keyword id="KW-0813">Transport</keyword>
<gene>
    <name evidence="4" type="primary">rbsB</name>
    <name evidence="4" type="ordered locus">PA1946</name>
</gene>
<dbReference type="EMBL" id="AE004091">
    <property type="protein sequence ID" value="AAG05334.1"/>
    <property type="molecule type" value="Genomic_DNA"/>
</dbReference>
<dbReference type="PIR" id="F83402">
    <property type="entry name" value="F83402"/>
</dbReference>
<dbReference type="RefSeq" id="NP_250636.1">
    <property type="nucleotide sequence ID" value="NC_002516.2"/>
</dbReference>
<dbReference type="RefSeq" id="WP_003113485.1">
    <property type="nucleotide sequence ID" value="NZ_QZGE01000030.1"/>
</dbReference>
<dbReference type="FunCoup" id="Q9I2F8">
    <property type="interactions" value="244"/>
</dbReference>
<dbReference type="STRING" id="208964.PA1946"/>
<dbReference type="PaxDb" id="208964-PA1946"/>
<dbReference type="DNASU" id="878276"/>
<dbReference type="GeneID" id="878276"/>
<dbReference type="KEGG" id="pae:PA1946"/>
<dbReference type="PATRIC" id="fig|208964.12.peg.2028"/>
<dbReference type="PseudoCAP" id="PA1946"/>
<dbReference type="HOGENOM" id="CLU_037628_3_2_6"/>
<dbReference type="InParanoid" id="Q9I2F8"/>
<dbReference type="OrthoDB" id="5592879at2"/>
<dbReference type="PhylomeDB" id="Q9I2F8"/>
<dbReference type="BioCyc" id="PAER208964:G1FZ6-1984-MONOMER"/>
<dbReference type="Proteomes" id="UP000002438">
    <property type="component" value="Chromosome"/>
</dbReference>
<dbReference type="GO" id="GO:0030288">
    <property type="term" value="C:outer membrane-bounded periplasmic space"/>
    <property type="evidence" value="ECO:0000318"/>
    <property type="project" value="GO_Central"/>
</dbReference>
<dbReference type="GO" id="GO:0048029">
    <property type="term" value="F:monosaccharide binding"/>
    <property type="evidence" value="ECO:0000318"/>
    <property type="project" value="GO_Central"/>
</dbReference>
<dbReference type="GO" id="GO:0055085">
    <property type="term" value="P:transmembrane transport"/>
    <property type="evidence" value="ECO:0000318"/>
    <property type="project" value="GO_Central"/>
</dbReference>
<dbReference type="CDD" id="cd19970">
    <property type="entry name" value="PBP1_ABC_sugar_binding-like"/>
    <property type="match status" value="1"/>
</dbReference>
<dbReference type="Gene3D" id="3.40.50.2300">
    <property type="match status" value="2"/>
</dbReference>
<dbReference type="InterPro" id="IPR028082">
    <property type="entry name" value="Peripla_BP_I"/>
</dbReference>
<dbReference type="InterPro" id="IPR025997">
    <property type="entry name" value="SBP_2_dom"/>
</dbReference>
<dbReference type="PANTHER" id="PTHR46847">
    <property type="entry name" value="D-ALLOSE-BINDING PERIPLASMIC PROTEIN-RELATED"/>
    <property type="match status" value="1"/>
</dbReference>
<dbReference type="PANTHER" id="PTHR46847:SF1">
    <property type="entry name" value="D-ALLOSE-BINDING PERIPLASMIC PROTEIN-RELATED"/>
    <property type="match status" value="1"/>
</dbReference>
<dbReference type="Pfam" id="PF13407">
    <property type="entry name" value="Peripla_BP_4"/>
    <property type="match status" value="1"/>
</dbReference>
<dbReference type="SUPFAM" id="SSF53822">
    <property type="entry name" value="Periplasmic binding protein-like I"/>
    <property type="match status" value="1"/>
</dbReference>
<proteinExistence type="evidence at protein level"/>
<sequence>MKRVASRRLLAAVVLTACSSFLPLSAVHAETPEKPRIALVMKSLANEFFLTMEDGAKAYQKEHADRFELVSNGIKDETDTSSQIRIVEQMIVSGVDALVIAPADSKALVPVVKKALDAGIVVVNIDNRFDPQVLQAKKIGVPFVGPDNRKGARLVGEYLAKRLKVGDEVGIIEGVSTTTNAQQRTAGFKDAMDAAGMKIVSLQSGNWEIEKGNAVASAMLNEHPDLKALLAGNDSMALGAVSAVRAAGRAGQVKVVGYDNIQAIKPMLKDGRVLATADQFAAKQAVFGIQTALKLLAGQTPEHEKDGVVETPVELVTAP</sequence>
<name>RALBP_PSEAE</name>